<dbReference type="EC" id="2.3.1.117"/>
<dbReference type="EMBL" id="AE000516">
    <property type="protein sequence ID" value="AAK45496.1"/>
    <property type="molecule type" value="Genomic_DNA"/>
</dbReference>
<dbReference type="PIR" id="G70608">
    <property type="entry name" value="G70608"/>
</dbReference>
<dbReference type="RefSeq" id="WP_003898768.1">
    <property type="nucleotide sequence ID" value="NZ_KK341227.1"/>
</dbReference>
<dbReference type="SMR" id="P9WP20"/>
<dbReference type="KEGG" id="mtc:MT1239"/>
<dbReference type="PATRIC" id="fig|83331.31.peg.1338"/>
<dbReference type="HOGENOM" id="CLU_057490_1_0_11"/>
<dbReference type="UniPathway" id="UPA00034">
    <property type="reaction ID" value="UER00019"/>
</dbReference>
<dbReference type="Proteomes" id="UP000001020">
    <property type="component" value="Chromosome"/>
</dbReference>
<dbReference type="GO" id="GO:0005737">
    <property type="term" value="C:cytoplasm"/>
    <property type="evidence" value="ECO:0007669"/>
    <property type="project" value="UniProtKB-SubCell"/>
</dbReference>
<dbReference type="GO" id="GO:0008666">
    <property type="term" value="F:2,3,4,5-tetrahydropyridine-2,6-dicarboxylate N-succinyltransferase activity"/>
    <property type="evidence" value="ECO:0007669"/>
    <property type="project" value="UniProtKB-UniRule"/>
</dbReference>
<dbReference type="GO" id="GO:0000287">
    <property type="term" value="F:magnesium ion binding"/>
    <property type="evidence" value="ECO:0007669"/>
    <property type="project" value="UniProtKB-UniRule"/>
</dbReference>
<dbReference type="GO" id="GO:0019877">
    <property type="term" value="P:diaminopimelate biosynthetic process"/>
    <property type="evidence" value="ECO:0007669"/>
    <property type="project" value="UniProtKB-UniRule"/>
</dbReference>
<dbReference type="GO" id="GO:0009089">
    <property type="term" value="P:lysine biosynthetic process via diaminopimelate"/>
    <property type="evidence" value="ECO:0007669"/>
    <property type="project" value="UniProtKB-UniRule"/>
</dbReference>
<dbReference type="CDD" id="cd04649">
    <property type="entry name" value="LbH_THP_succinylT_putative"/>
    <property type="match status" value="1"/>
</dbReference>
<dbReference type="FunFam" id="2.160.10.10:FF:000009">
    <property type="entry name" value="2,3,4,5-tetrahydropyridine-2,6-dicarboxylate N-succinyltransferase"/>
    <property type="match status" value="1"/>
</dbReference>
<dbReference type="FunFam" id="3.30.70.2010:FF:000002">
    <property type="entry name" value="2,3,4,5-tetrahydropyridine-2,6-dicarboxylate N-succinyltransferase"/>
    <property type="match status" value="1"/>
</dbReference>
<dbReference type="Gene3D" id="3.30.70.2010">
    <property type="match status" value="1"/>
</dbReference>
<dbReference type="Gene3D" id="2.160.10.10">
    <property type="entry name" value="Hexapeptide repeat proteins"/>
    <property type="match status" value="1"/>
</dbReference>
<dbReference type="Gene3D" id="3.30.60.70">
    <property type="entry name" value="Trimeric LpxA-like enzymes"/>
    <property type="match status" value="1"/>
</dbReference>
<dbReference type="HAMAP" id="MF_02122">
    <property type="entry name" value="DapD_type2"/>
    <property type="match status" value="1"/>
</dbReference>
<dbReference type="InterPro" id="IPR019875">
    <property type="entry name" value="DapD_actinobacteria"/>
</dbReference>
<dbReference type="InterPro" id="IPR001451">
    <property type="entry name" value="Hexapep"/>
</dbReference>
<dbReference type="InterPro" id="IPR032784">
    <property type="entry name" value="THDPS_M"/>
</dbReference>
<dbReference type="InterPro" id="IPR038361">
    <property type="entry name" value="THDPS_M_sf"/>
</dbReference>
<dbReference type="InterPro" id="IPR011004">
    <property type="entry name" value="Trimer_LpxA-like_sf"/>
</dbReference>
<dbReference type="InterPro" id="IPR026586">
    <property type="entry name" value="Type2_DapD"/>
</dbReference>
<dbReference type="NCBIfam" id="TIGR03535">
    <property type="entry name" value="DapD_actino"/>
    <property type="match status" value="1"/>
</dbReference>
<dbReference type="Pfam" id="PF14602">
    <property type="entry name" value="Hexapep_2"/>
    <property type="match status" value="1"/>
</dbReference>
<dbReference type="Pfam" id="PF14789">
    <property type="entry name" value="THDPS_M"/>
    <property type="match status" value="1"/>
</dbReference>
<dbReference type="SUPFAM" id="SSF51161">
    <property type="entry name" value="Trimeric LpxA-like enzymes"/>
    <property type="match status" value="1"/>
</dbReference>
<reference key="1">
    <citation type="journal article" date="2002" name="J. Bacteriol.">
        <title>Whole-genome comparison of Mycobacterium tuberculosis clinical and laboratory strains.</title>
        <authorList>
            <person name="Fleischmann R.D."/>
            <person name="Alland D."/>
            <person name="Eisen J.A."/>
            <person name="Carpenter L."/>
            <person name="White O."/>
            <person name="Peterson J.D."/>
            <person name="DeBoy R.T."/>
            <person name="Dodson R.J."/>
            <person name="Gwinn M.L."/>
            <person name="Haft D.H."/>
            <person name="Hickey E.K."/>
            <person name="Kolonay J.F."/>
            <person name="Nelson W.C."/>
            <person name="Umayam L.A."/>
            <person name="Ermolaeva M.D."/>
            <person name="Salzberg S.L."/>
            <person name="Delcher A."/>
            <person name="Utterback T.R."/>
            <person name="Weidman J.F."/>
            <person name="Khouri H.M."/>
            <person name="Gill J."/>
            <person name="Mikula A."/>
            <person name="Bishai W."/>
            <person name="Jacobs W.R. Jr."/>
            <person name="Venter J.C."/>
            <person name="Fraser C.M."/>
        </authorList>
    </citation>
    <scope>NUCLEOTIDE SEQUENCE [LARGE SCALE GENOMIC DNA]</scope>
    <source>
        <strain>CDC 1551 / Oshkosh</strain>
    </source>
</reference>
<gene>
    <name type="primary">dapD</name>
    <name type="ordered locus">MT1239</name>
</gene>
<sequence>MSTVTGAAGIGLATLAADGSVLDTWFPAPELTESGTSATSRLAVSDVPVELAALIGRDDDRRTETIAVRTVIGSLDDVAADPYDAYLRLHLLSHRLVAPHGLNAGGLFGVLTNVVWTNHGPCAIDGFEAVRARLRRRGPVTVYGVDKFPRMVDYVVPTGVRIADADRVRLGAHLAPGTTVMHEGFVNYNAGTLGASMVEGRISAGVVVGDGSDVGGGASIMGTLSGGGTHVISIGKRCLLGANSGLGISLGDDCVVEAGLYVTAGTRVTMPDSNSVKARELSGSSNLLFRRNSVSGAVEVLARDGQGIALNEDLHAN</sequence>
<evidence type="ECO:0000250" key="1"/>
<evidence type="ECO:0000305" key="2"/>
<organism>
    <name type="scientific">Mycobacterium tuberculosis (strain CDC 1551 / Oshkosh)</name>
    <dbReference type="NCBI Taxonomy" id="83331"/>
    <lineage>
        <taxon>Bacteria</taxon>
        <taxon>Bacillati</taxon>
        <taxon>Actinomycetota</taxon>
        <taxon>Actinomycetes</taxon>
        <taxon>Mycobacteriales</taxon>
        <taxon>Mycobacteriaceae</taxon>
        <taxon>Mycobacterium</taxon>
        <taxon>Mycobacterium tuberculosis complex</taxon>
    </lineage>
</organism>
<name>DAPD_MYCTO</name>
<comment type="function">
    <text evidence="1">Catalyzes the conversion of the cyclic tetrahydrodipicolinate (THDP) into the acyclic N-succinyl-L-2-amino-6-oxopimelate using succinyl-CoA.</text>
</comment>
<comment type="catalytic activity">
    <reaction>
        <text>(S)-2,3,4,5-tetrahydrodipicolinate + succinyl-CoA + H2O = (S)-2-succinylamino-6-oxoheptanedioate + CoA</text>
        <dbReference type="Rhea" id="RHEA:17325"/>
        <dbReference type="ChEBI" id="CHEBI:15377"/>
        <dbReference type="ChEBI" id="CHEBI:15685"/>
        <dbReference type="ChEBI" id="CHEBI:16845"/>
        <dbReference type="ChEBI" id="CHEBI:57287"/>
        <dbReference type="ChEBI" id="CHEBI:57292"/>
        <dbReference type="EC" id="2.3.1.117"/>
    </reaction>
</comment>
<comment type="pathway">
    <text>Amino-acid biosynthesis; L-lysine biosynthesis via DAP pathway; LL-2,6-diaminopimelate from (S)-tetrahydrodipicolinate (succinylase route): step 1/3.</text>
</comment>
<comment type="subunit">
    <text evidence="1">Homotrimer.</text>
</comment>
<comment type="subcellular location">
    <subcellularLocation>
        <location evidence="1">Cytoplasm</location>
    </subcellularLocation>
</comment>
<comment type="similarity">
    <text evidence="2">Belongs to the type 2 tetrahydrodipicolinate N-succinyltransferase family.</text>
</comment>
<accession>P9WP20</accession>
<accession>L0T666</accession>
<accession>O05302</accession>
<accession>Q7D8M6</accession>
<keyword id="KW-0012">Acyltransferase</keyword>
<keyword id="KW-0028">Amino-acid biosynthesis</keyword>
<keyword id="KW-0963">Cytoplasm</keyword>
<keyword id="KW-0220">Diaminopimelate biosynthesis</keyword>
<keyword id="KW-0457">Lysine biosynthesis</keyword>
<keyword id="KW-0460">Magnesium</keyword>
<keyword id="KW-0479">Metal-binding</keyword>
<keyword id="KW-1185">Reference proteome</keyword>
<keyword id="KW-0808">Transferase</keyword>
<protein>
    <recommendedName>
        <fullName>2,3,4,5-tetrahydropyridine-2,6-dicarboxylate N-succinyltransferase</fullName>
        <ecNumber>2.3.1.117</ecNumber>
    </recommendedName>
    <alternativeName>
        <fullName>Tetrahydrodipicolinate N-succinyltransferase</fullName>
        <shortName>THDP succinyltransferase</shortName>
        <shortName>THP succinyltransferase</shortName>
    </alternativeName>
    <alternativeName>
        <fullName>Tetrahydropicolinate succinylase</fullName>
    </alternativeName>
</protein>
<proteinExistence type="inferred from homology"/>
<feature type="chain" id="PRO_0000427028" description="2,3,4,5-tetrahydropyridine-2,6-dicarboxylate N-succinyltransferase">
    <location>
        <begin position="1"/>
        <end position="317"/>
    </location>
</feature>
<feature type="active site" description="Acyl-anhydride intermediate" evidence="1">
    <location>
        <position position="199"/>
    </location>
</feature>
<feature type="binding site" evidence="1">
    <location>
        <position position="166"/>
    </location>
    <ligand>
        <name>Mg(2+)</name>
        <dbReference type="ChEBI" id="CHEBI:18420"/>
        <label>1</label>
        <note>ligand shared between trimeric partners</note>
    </ligand>
</feature>
<feature type="binding site" evidence="1">
    <location>
        <position position="183"/>
    </location>
    <ligand>
        <name>Mg(2+)</name>
        <dbReference type="ChEBI" id="CHEBI:18420"/>
        <label>2</label>
        <note>ligand shared between trimeric partners</note>
    </ligand>
</feature>
<feature type="binding site" evidence="1">
    <location>
        <position position="201"/>
    </location>
    <ligand>
        <name>succinyl-CoA</name>
        <dbReference type="ChEBI" id="CHEBI:57292"/>
    </ligand>
</feature>
<feature type="binding site" evidence="1">
    <location>
        <position position="216"/>
    </location>
    <ligand>
        <name>succinyl-CoA</name>
        <dbReference type="ChEBI" id="CHEBI:57292"/>
    </ligand>
</feature>
<feature type="binding site" evidence="1">
    <location>
        <position position="219"/>
    </location>
    <ligand>
        <name>succinyl-CoA</name>
        <dbReference type="ChEBI" id="CHEBI:57292"/>
    </ligand>
</feature>
<feature type="binding site" evidence="1">
    <location>
        <position position="242"/>
    </location>
    <ligand>
        <name>succinyl-CoA</name>
        <dbReference type="ChEBI" id="CHEBI:57292"/>
    </ligand>
</feature>
<feature type="binding site" evidence="1">
    <location>
        <begin position="257"/>
        <end position="258"/>
    </location>
    <ligand>
        <name>succinyl-CoA</name>
        <dbReference type="ChEBI" id="CHEBI:57292"/>
    </ligand>
</feature>
<feature type="binding site" evidence="1">
    <location>
        <position position="265"/>
    </location>
    <ligand>
        <name>succinyl-CoA</name>
        <dbReference type="ChEBI" id="CHEBI:57292"/>
    </ligand>
</feature>
<feature type="binding site" evidence="1">
    <location>
        <position position="277"/>
    </location>
    <ligand>
        <name>succinyl-CoA</name>
        <dbReference type="ChEBI" id="CHEBI:57292"/>
    </ligand>
</feature>
<feature type="binding site" evidence="1">
    <location>
        <begin position="290"/>
        <end position="293"/>
    </location>
    <ligand>
        <name>succinyl-CoA</name>
        <dbReference type="ChEBI" id="CHEBI:57292"/>
    </ligand>
</feature>